<gene>
    <name evidence="1" type="primary">ispD</name>
    <name type="ordered locus">GTNG_0081</name>
</gene>
<proteinExistence type="inferred from homology"/>
<sequence length="228" mass="25426">MNYEAIVLAAGQGKRMNAGMNKQFIELGGEPLIVRTLKVFDGDERCNGIVLVVNPTERGQFEQLFERYRIRKVVAFADGGQERQHSVYNGLQALRSGEIVLIHDGARPFVRIRHLHELADAAVQYGAAIPAVRVKDTIKKVDGLFVEQTIDRSSLWAVQTPQAFRLSLIMEAHEEAKKAGYLGTDDASLVERLGRPVKILEGDYRNIKLTTPEDLLFAEAILASRIAE</sequence>
<feature type="chain" id="PRO_1000022926" description="2-C-methyl-D-erythritol 4-phosphate cytidylyltransferase">
    <location>
        <begin position="1"/>
        <end position="228"/>
    </location>
</feature>
<feature type="site" description="Transition state stabilizer" evidence="1">
    <location>
        <position position="15"/>
    </location>
</feature>
<feature type="site" description="Transition state stabilizer" evidence="1">
    <location>
        <position position="22"/>
    </location>
</feature>
<feature type="site" description="Positions MEP for the nucleophilic attack" evidence="1">
    <location>
        <position position="152"/>
    </location>
</feature>
<feature type="site" description="Positions MEP for the nucleophilic attack" evidence="1">
    <location>
        <position position="208"/>
    </location>
</feature>
<protein>
    <recommendedName>
        <fullName evidence="1">2-C-methyl-D-erythritol 4-phosphate cytidylyltransferase</fullName>
        <ecNumber evidence="1">2.7.7.60</ecNumber>
    </recommendedName>
    <alternativeName>
        <fullName evidence="1">4-diphosphocytidyl-2C-methyl-D-erythritol synthase</fullName>
    </alternativeName>
    <alternativeName>
        <fullName evidence="1">MEP cytidylyltransferase</fullName>
        <shortName evidence="1">MCT</shortName>
    </alternativeName>
</protein>
<evidence type="ECO:0000255" key="1">
    <source>
        <dbReference type="HAMAP-Rule" id="MF_00108"/>
    </source>
</evidence>
<name>ISPD_GEOTN</name>
<organism>
    <name type="scientific">Geobacillus thermodenitrificans (strain NG80-2)</name>
    <dbReference type="NCBI Taxonomy" id="420246"/>
    <lineage>
        <taxon>Bacteria</taxon>
        <taxon>Bacillati</taxon>
        <taxon>Bacillota</taxon>
        <taxon>Bacilli</taxon>
        <taxon>Bacillales</taxon>
        <taxon>Anoxybacillaceae</taxon>
        <taxon>Geobacillus</taxon>
    </lineage>
</organism>
<accession>A4IJG4</accession>
<dbReference type="EC" id="2.7.7.60" evidence="1"/>
<dbReference type="EMBL" id="CP000557">
    <property type="protein sequence ID" value="ABO65468.1"/>
    <property type="molecule type" value="Genomic_DNA"/>
</dbReference>
<dbReference type="RefSeq" id="WP_008882046.1">
    <property type="nucleotide sequence ID" value="NC_009328.1"/>
</dbReference>
<dbReference type="SMR" id="A4IJG4"/>
<dbReference type="KEGG" id="gtn:GTNG_0081"/>
<dbReference type="eggNOG" id="COG1211">
    <property type="taxonomic scope" value="Bacteria"/>
</dbReference>
<dbReference type="HOGENOM" id="CLU_061281_2_2_9"/>
<dbReference type="UniPathway" id="UPA00056">
    <property type="reaction ID" value="UER00093"/>
</dbReference>
<dbReference type="Proteomes" id="UP000001578">
    <property type="component" value="Chromosome"/>
</dbReference>
<dbReference type="GO" id="GO:0050518">
    <property type="term" value="F:2-C-methyl-D-erythritol 4-phosphate cytidylyltransferase activity"/>
    <property type="evidence" value="ECO:0007669"/>
    <property type="project" value="UniProtKB-UniRule"/>
</dbReference>
<dbReference type="GO" id="GO:0019288">
    <property type="term" value="P:isopentenyl diphosphate biosynthetic process, methylerythritol 4-phosphate pathway"/>
    <property type="evidence" value="ECO:0007669"/>
    <property type="project" value="UniProtKB-UniRule"/>
</dbReference>
<dbReference type="CDD" id="cd02516">
    <property type="entry name" value="CDP-ME_synthetase"/>
    <property type="match status" value="1"/>
</dbReference>
<dbReference type="FunFam" id="3.90.550.10:FF:000003">
    <property type="entry name" value="2-C-methyl-D-erythritol 4-phosphate cytidylyltransferase"/>
    <property type="match status" value="1"/>
</dbReference>
<dbReference type="Gene3D" id="3.90.550.10">
    <property type="entry name" value="Spore Coat Polysaccharide Biosynthesis Protein SpsA, Chain A"/>
    <property type="match status" value="1"/>
</dbReference>
<dbReference type="HAMAP" id="MF_00108">
    <property type="entry name" value="IspD"/>
    <property type="match status" value="1"/>
</dbReference>
<dbReference type="InterPro" id="IPR001228">
    <property type="entry name" value="IspD"/>
</dbReference>
<dbReference type="InterPro" id="IPR034683">
    <property type="entry name" value="IspD/TarI"/>
</dbReference>
<dbReference type="InterPro" id="IPR050088">
    <property type="entry name" value="IspD/TarI_cytidylyltransf_bact"/>
</dbReference>
<dbReference type="InterPro" id="IPR018294">
    <property type="entry name" value="ISPD_synthase_CS"/>
</dbReference>
<dbReference type="InterPro" id="IPR029044">
    <property type="entry name" value="Nucleotide-diphossugar_trans"/>
</dbReference>
<dbReference type="NCBIfam" id="TIGR00453">
    <property type="entry name" value="ispD"/>
    <property type="match status" value="1"/>
</dbReference>
<dbReference type="PANTHER" id="PTHR32125">
    <property type="entry name" value="2-C-METHYL-D-ERYTHRITOL 4-PHOSPHATE CYTIDYLYLTRANSFERASE, CHLOROPLASTIC"/>
    <property type="match status" value="1"/>
</dbReference>
<dbReference type="PANTHER" id="PTHR32125:SF4">
    <property type="entry name" value="2-C-METHYL-D-ERYTHRITOL 4-PHOSPHATE CYTIDYLYLTRANSFERASE, CHLOROPLASTIC"/>
    <property type="match status" value="1"/>
</dbReference>
<dbReference type="Pfam" id="PF01128">
    <property type="entry name" value="IspD"/>
    <property type="match status" value="1"/>
</dbReference>
<dbReference type="SUPFAM" id="SSF53448">
    <property type="entry name" value="Nucleotide-diphospho-sugar transferases"/>
    <property type="match status" value="1"/>
</dbReference>
<dbReference type="PROSITE" id="PS01295">
    <property type="entry name" value="ISPD"/>
    <property type="match status" value="1"/>
</dbReference>
<reference key="1">
    <citation type="journal article" date="2007" name="Proc. Natl. Acad. Sci. U.S.A.">
        <title>Genome and proteome of long-chain alkane degrading Geobacillus thermodenitrificans NG80-2 isolated from a deep-subsurface oil reservoir.</title>
        <authorList>
            <person name="Feng L."/>
            <person name="Wang W."/>
            <person name="Cheng J."/>
            <person name="Ren Y."/>
            <person name="Zhao G."/>
            <person name="Gao C."/>
            <person name="Tang Y."/>
            <person name="Liu X."/>
            <person name="Han W."/>
            <person name="Peng X."/>
            <person name="Liu R."/>
            <person name="Wang L."/>
        </authorList>
    </citation>
    <scope>NUCLEOTIDE SEQUENCE [LARGE SCALE GENOMIC DNA]</scope>
    <source>
        <strain>NG80-2</strain>
    </source>
</reference>
<comment type="function">
    <text evidence="1">Catalyzes the formation of 4-diphosphocytidyl-2-C-methyl-D-erythritol from CTP and 2-C-methyl-D-erythritol 4-phosphate (MEP).</text>
</comment>
<comment type="catalytic activity">
    <reaction evidence="1">
        <text>2-C-methyl-D-erythritol 4-phosphate + CTP + H(+) = 4-CDP-2-C-methyl-D-erythritol + diphosphate</text>
        <dbReference type="Rhea" id="RHEA:13429"/>
        <dbReference type="ChEBI" id="CHEBI:15378"/>
        <dbReference type="ChEBI" id="CHEBI:33019"/>
        <dbReference type="ChEBI" id="CHEBI:37563"/>
        <dbReference type="ChEBI" id="CHEBI:57823"/>
        <dbReference type="ChEBI" id="CHEBI:58262"/>
        <dbReference type="EC" id="2.7.7.60"/>
    </reaction>
</comment>
<comment type="pathway">
    <text evidence="1">Isoprenoid biosynthesis; isopentenyl diphosphate biosynthesis via DXP pathway; isopentenyl diphosphate from 1-deoxy-D-xylulose 5-phosphate: step 2/6.</text>
</comment>
<comment type="similarity">
    <text evidence="1">Belongs to the IspD/TarI cytidylyltransferase family. IspD subfamily.</text>
</comment>
<keyword id="KW-0414">Isoprene biosynthesis</keyword>
<keyword id="KW-0548">Nucleotidyltransferase</keyword>
<keyword id="KW-0808">Transferase</keyword>